<keyword id="KW-0249">Electron transport</keyword>
<keyword id="KW-0349">Heme</keyword>
<keyword id="KW-0408">Iron</keyword>
<keyword id="KW-0472">Membrane</keyword>
<keyword id="KW-0479">Metal-binding</keyword>
<keyword id="KW-0496">Mitochondrion</keyword>
<keyword id="KW-0999">Mitochondrion inner membrane</keyword>
<keyword id="KW-0679">Respiratory chain</keyword>
<keyword id="KW-0812">Transmembrane</keyword>
<keyword id="KW-1133">Transmembrane helix</keyword>
<keyword id="KW-0813">Transport</keyword>
<keyword id="KW-0830">Ubiquinone</keyword>
<gene>
    <name type="primary">MT-CYB</name>
    <name type="synonym">COB</name>
    <name type="synonym">CYTB</name>
    <name type="synonym">MTCYB</name>
</gene>
<comment type="function">
    <text evidence="2">Component of the ubiquinol-cytochrome c reductase complex (complex III or cytochrome b-c1 complex) that is part of the mitochondrial respiratory chain. The b-c1 complex mediates electron transfer from ubiquinol to cytochrome c. Contributes to the generation of a proton gradient across the mitochondrial membrane that is then used for ATP synthesis.</text>
</comment>
<comment type="cofactor">
    <cofactor evidence="2">
        <name>heme b</name>
        <dbReference type="ChEBI" id="CHEBI:60344"/>
    </cofactor>
    <text evidence="2">Binds 2 heme b groups non-covalently.</text>
</comment>
<comment type="subunit">
    <text evidence="2">The cytochrome bc1 complex contains 11 subunits: 3 respiratory subunits (MT-CYB, CYC1 and UQCRFS1), 2 core proteins (UQCRC1 and UQCRC2) and 6 low-molecular weight proteins (UQCRH/QCR6, UQCRB/QCR7, UQCRQ/QCR8, UQCR10/QCR9, UQCR11/QCR10 and a cleavage product of UQCRFS1). This cytochrome bc1 complex then forms a dimer.</text>
</comment>
<comment type="subcellular location">
    <subcellularLocation>
        <location evidence="2">Mitochondrion inner membrane</location>
        <topology evidence="2">Multi-pass membrane protein</topology>
    </subcellularLocation>
</comment>
<comment type="miscellaneous">
    <text evidence="1">Heme 1 (or BL or b562) is low-potential and absorbs at about 562 nm, and heme 2 (or BH or b566) is high-potential and absorbs at about 566 nm.</text>
</comment>
<comment type="similarity">
    <text evidence="3 4">Belongs to the cytochrome b family.</text>
</comment>
<comment type="caution">
    <text evidence="2">The full-length protein contains only eight transmembrane helices, not nine as predicted by bioinformatics tools.</text>
</comment>
<protein>
    <recommendedName>
        <fullName>Cytochrome b</fullName>
    </recommendedName>
    <alternativeName>
        <fullName>Complex III subunit 3</fullName>
    </alternativeName>
    <alternativeName>
        <fullName>Complex III subunit III</fullName>
    </alternativeName>
    <alternativeName>
        <fullName>Cytochrome b-c1 complex subunit 3</fullName>
    </alternativeName>
    <alternativeName>
        <fullName>Ubiquinol-cytochrome-c reductase complex cytochrome b subunit</fullName>
    </alternativeName>
</protein>
<organism>
    <name type="scientific">Cervus elaphus roosevelti</name>
    <name type="common">Roosevelt's wapiti</name>
    <name type="synonym">Cervus canadensis roosevelti</name>
    <dbReference type="NCBI Taxonomy" id="65383"/>
    <lineage>
        <taxon>Eukaryota</taxon>
        <taxon>Metazoa</taxon>
        <taxon>Chordata</taxon>
        <taxon>Craniata</taxon>
        <taxon>Vertebrata</taxon>
        <taxon>Euteleostomi</taxon>
        <taxon>Mammalia</taxon>
        <taxon>Eutheria</taxon>
        <taxon>Laurasiatheria</taxon>
        <taxon>Artiodactyla</taxon>
        <taxon>Ruminantia</taxon>
        <taxon>Pecora</taxon>
        <taxon>Cervidae</taxon>
        <taxon>Cervinae</taxon>
        <taxon>Cervus</taxon>
    </lineage>
</organism>
<sequence>MINTRKTHPLMKIVNNAFIDLPAPSNISSWWNFGSLLGICLILQILTGLFLAMHYTSDTMTAFSSVTHICRDVNYGWIIRYMHANGASMFFICLFMHVGRGLYYGSYTFLETWNIGVILLFTVMATAFVGYVLPWGQMSFWGATVITNLLSAIPYIGTNLVEWIWGGFSVDKATLTRFFAFHFILPFIIAALAMVHLLFLHETGSNNPTGIPSDADKIPFHPYYTIKDILGILLLVLFLMLLVLFAPDLLGDPDNYTPANPLNTPPHIKPEWYFLFAYAILRSIPNKLGGVLALISSILILILMPLLHTSKQRSMMFRPFSQCLFWILVADLLTLTWIGGQPVEYPFIIIGQLASILYFFIILVLMPITSTIENNLLKW</sequence>
<feature type="chain" id="PRO_0000254788" description="Cytochrome b">
    <location>
        <begin position="1"/>
        <end position="379"/>
    </location>
</feature>
<feature type="transmembrane region" description="Helical" evidence="2">
    <location>
        <begin position="33"/>
        <end position="53"/>
    </location>
</feature>
<feature type="transmembrane region" description="Helical" evidence="2">
    <location>
        <begin position="77"/>
        <end position="98"/>
    </location>
</feature>
<feature type="transmembrane region" description="Helical" evidence="2">
    <location>
        <begin position="113"/>
        <end position="133"/>
    </location>
</feature>
<feature type="transmembrane region" description="Helical" evidence="2">
    <location>
        <begin position="178"/>
        <end position="198"/>
    </location>
</feature>
<feature type="transmembrane region" description="Helical" evidence="2">
    <location>
        <begin position="226"/>
        <end position="246"/>
    </location>
</feature>
<feature type="transmembrane region" description="Helical" evidence="2">
    <location>
        <begin position="288"/>
        <end position="308"/>
    </location>
</feature>
<feature type="transmembrane region" description="Helical" evidence="2">
    <location>
        <begin position="320"/>
        <end position="340"/>
    </location>
</feature>
<feature type="transmembrane region" description="Helical" evidence="2">
    <location>
        <begin position="347"/>
        <end position="367"/>
    </location>
</feature>
<feature type="binding site" description="axial binding residue" evidence="2">
    <location>
        <position position="83"/>
    </location>
    <ligand>
        <name>heme b</name>
        <dbReference type="ChEBI" id="CHEBI:60344"/>
        <label>b562</label>
    </ligand>
    <ligandPart>
        <name>Fe</name>
        <dbReference type="ChEBI" id="CHEBI:18248"/>
    </ligandPart>
</feature>
<feature type="binding site" description="axial binding residue" evidence="2">
    <location>
        <position position="97"/>
    </location>
    <ligand>
        <name>heme b</name>
        <dbReference type="ChEBI" id="CHEBI:60344"/>
        <label>b566</label>
    </ligand>
    <ligandPart>
        <name>Fe</name>
        <dbReference type="ChEBI" id="CHEBI:18248"/>
    </ligandPart>
</feature>
<feature type="binding site" description="axial binding residue" evidence="2">
    <location>
        <position position="182"/>
    </location>
    <ligand>
        <name>heme b</name>
        <dbReference type="ChEBI" id="CHEBI:60344"/>
        <label>b562</label>
    </ligand>
    <ligandPart>
        <name>Fe</name>
        <dbReference type="ChEBI" id="CHEBI:18248"/>
    </ligandPart>
</feature>
<feature type="binding site" description="axial binding residue" evidence="2">
    <location>
        <position position="196"/>
    </location>
    <ligand>
        <name>heme b</name>
        <dbReference type="ChEBI" id="CHEBI:60344"/>
        <label>b566</label>
    </ligand>
    <ligandPart>
        <name>Fe</name>
        <dbReference type="ChEBI" id="CHEBI:18248"/>
    </ligandPart>
</feature>
<feature type="binding site" evidence="2">
    <location>
        <position position="201"/>
    </location>
    <ligand>
        <name>a ubiquinone</name>
        <dbReference type="ChEBI" id="CHEBI:16389"/>
    </ligand>
</feature>
<evidence type="ECO:0000250" key="1"/>
<evidence type="ECO:0000250" key="2">
    <source>
        <dbReference type="UniProtKB" id="P00157"/>
    </source>
</evidence>
<evidence type="ECO:0000255" key="3">
    <source>
        <dbReference type="PROSITE-ProRule" id="PRU00967"/>
    </source>
</evidence>
<evidence type="ECO:0000255" key="4">
    <source>
        <dbReference type="PROSITE-ProRule" id="PRU00968"/>
    </source>
</evidence>
<reference key="1">
    <citation type="submission" date="2003-07" db="EMBL/GenBank/DDBJ databases">
        <title>Phylogeny of Cervidae based on mitochondrial genes.</title>
        <authorList>
            <person name="Ludt C.J."/>
            <person name="Kuehn R."/>
            <person name="Schroeder W."/>
            <person name="Rottmann O."/>
        </authorList>
    </citation>
    <scope>NUCLEOTIDE SEQUENCE [GENOMIC DNA]</scope>
    <source>
        <tissue>Spongiosa bone</tissue>
    </source>
</reference>
<dbReference type="EMBL" id="AY347752">
    <property type="protein sequence ID" value="AAQ79837.1"/>
    <property type="molecule type" value="Genomic_DNA"/>
</dbReference>
<dbReference type="SMR" id="Q6V8Y1"/>
<dbReference type="GO" id="GO:0005743">
    <property type="term" value="C:mitochondrial inner membrane"/>
    <property type="evidence" value="ECO:0007669"/>
    <property type="project" value="UniProtKB-SubCell"/>
</dbReference>
<dbReference type="GO" id="GO:0045275">
    <property type="term" value="C:respiratory chain complex III"/>
    <property type="evidence" value="ECO:0007669"/>
    <property type="project" value="InterPro"/>
</dbReference>
<dbReference type="GO" id="GO:0046872">
    <property type="term" value="F:metal ion binding"/>
    <property type="evidence" value="ECO:0007669"/>
    <property type="project" value="UniProtKB-KW"/>
</dbReference>
<dbReference type="GO" id="GO:0008121">
    <property type="term" value="F:ubiquinol-cytochrome-c reductase activity"/>
    <property type="evidence" value="ECO:0007669"/>
    <property type="project" value="InterPro"/>
</dbReference>
<dbReference type="GO" id="GO:0006122">
    <property type="term" value="P:mitochondrial electron transport, ubiquinol to cytochrome c"/>
    <property type="evidence" value="ECO:0007669"/>
    <property type="project" value="TreeGrafter"/>
</dbReference>
<dbReference type="CDD" id="cd00290">
    <property type="entry name" value="cytochrome_b_C"/>
    <property type="match status" value="1"/>
</dbReference>
<dbReference type="CDD" id="cd00284">
    <property type="entry name" value="Cytochrome_b_N"/>
    <property type="match status" value="1"/>
</dbReference>
<dbReference type="FunFam" id="1.20.810.10:FF:000002">
    <property type="entry name" value="Cytochrome b"/>
    <property type="match status" value="1"/>
</dbReference>
<dbReference type="Gene3D" id="1.20.810.10">
    <property type="entry name" value="Cytochrome Bc1 Complex, Chain C"/>
    <property type="match status" value="1"/>
</dbReference>
<dbReference type="InterPro" id="IPR005798">
    <property type="entry name" value="Cyt_b/b6_C"/>
</dbReference>
<dbReference type="InterPro" id="IPR036150">
    <property type="entry name" value="Cyt_b/b6_C_sf"/>
</dbReference>
<dbReference type="InterPro" id="IPR005797">
    <property type="entry name" value="Cyt_b/b6_N"/>
</dbReference>
<dbReference type="InterPro" id="IPR027387">
    <property type="entry name" value="Cytb/b6-like_sf"/>
</dbReference>
<dbReference type="InterPro" id="IPR030689">
    <property type="entry name" value="Cytochrome_b"/>
</dbReference>
<dbReference type="InterPro" id="IPR048260">
    <property type="entry name" value="Cytochrome_b_C_euk/bac"/>
</dbReference>
<dbReference type="InterPro" id="IPR048259">
    <property type="entry name" value="Cytochrome_b_N_euk/bac"/>
</dbReference>
<dbReference type="InterPro" id="IPR016174">
    <property type="entry name" value="Di-haem_cyt_TM"/>
</dbReference>
<dbReference type="PANTHER" id="PTHR19271">
    <property type="entry name" value="CYTOCHROME B"/>
    <property type="match status" value="1"/>
</dbReference>
<dbReference type="PANTHER" id="PTHR19271:SF16">
    <property type="entry name" value="CYTOCHROME B"/>
    <property type="match status" value="1"/>
</dbReference>
<dbReference type="Pfam" id="PF00032">
    <property type="entry name" value="Cytochrom_B_C"/>
    <property type="match status" value="1"/>
</dbReference>
<dbReference type="Pfam" id="PF00033">
    <property type="entry name" value="Cytochrome_B"/>
    <property type="match status" value="1"/>
</dbReference>
<dbReference type="PIRSF" id="PIRSF038885">
    <property type="entry name" value="COB"/>
    <property type="match status" value="1"/>
</dbReference>
<dbReference type="SUPFAM" id="SSF81648">
    <property type="entry name" value="a domain/subunit of cytochrome bc1 complex (Ubiquinol-cytochrome c reductase)"/>
    <property type="match status" value="1"/>
</dbReference>
<dbReference type="SUPFAM" id="SSF81342">
    <property type="entry name" value="Transmembrane di-heme cytochromes"/>
    <property type="match status" value="1"/>
</dbReference>
<dbReference type="PROSITE" id="PS51003">
    <property type="entry name" value="CYTB_CTER"/>
    <property type="match status" value="1"/>
</dbReference>
<dbReference type="PROSITE" id="PS51002">
    <property type="entry name" value="CYTB_NTER"/>
    <property type="match status" value="1"/>
</dbReference>
<accession>Q6V8Y1</accession>
<name>CYB_CEREO</name>
<geneLocation type="mitochondrion"/>
<proteinExistence type="inferred from homology"/>